<accession>Q5SFA6</accession>
<sequence length="326" mass="36411">MTADRWAGRTVLVTGALGFIGSHFVRQLEARGAEVLALYRTERPQLQAELAALDRVRLIRTELRDESDVRGAFKYLAPSIDTVVHCAAMDGNAQFKLERSAEILDSNQRTISHLLNCVRDFGVGEAVVMSSSELYCAPPTAAAHEDDDFRRSMRYTDNGYVLSKTYGEILARLHREQFGTNVFLVRPGNVYGPGDGYDPSRGRVIPSMLAKADAGEEIEIWGDGSQTRSFIHVTDLVRASLRLLETGKYPEMNVAGAEQVSILELARMVMAVLGRPERIRLDPGRPVGAPSRLLDLTRMSEVIDFEPQPLRTGLEETARWFRHHTR</sequence>
<reference key="1">
    <citation type="journal article" date="2004" name="Antimicrob. Agents Chemother.">
        <title>Chalcomycin biosynthesis gene cluster from Streptomyces bikiniensis: novel features of an unusual ketolide produced through expression of the chm polyketide synthase in Streptomyces fradiae.</title>
        <authorList>
            <person name="Ward S.L."/>
            <person name="Hu Z."/>
            <person name="Schirmer A."/>
            <person name="Reid R."/>
            <person name="Revill W.P."/>
            <person name="Reeves C.D."/>
            <person name="Petrakovsky O.V."/>
            <person name="Dong S.D."/>
            <person name="Katz L."/>
        </authorList>
    </citation>
    <scope>NUCLEOTIDE SEQUENCE [GENOMIC DNA]</scope>
    <source>
        <strain>NRRL 2737</strain>
    </source>
</reference>
<reference key="2">
    <citation type="journal article" date="2012" name="Biochemistry">
        <title>Structural and functional studies on a 3'-epimerase involved in the biosynthesis of dTDP-6-deoxy-D-allose.</title>
        <authorList>
            <person name="Kubiak R.L."/>
            <person name="Phillips R.K."/>
            <person name="Zmudka M.W."/>
            <person name="Ahn M.R."/>
            <person name="Maka E.M."/>
            <person name="Pyeatt G.L."/>
            <person name="Roggensack S.J."/>
            <person name="Holden H.M."/>
        </authorList>
    </citation>
    <scope>FUNCTION</scope>
    <scope>CATALYTIC ACTIVITY</scope>
    <source>
        <strain>NRRL 2737</strain>
    </source>
</reference>
<feature type="chain" id="PRO_0000425104" description="dTDP-4-dehydro-6-deoxy-D-allose reductase">
    <location>
        <begin position="1"/>
        <end position="326"/>
    </location>
</feature>
<feature type="active site" description="Proton donor/acceptor" evidence="1">
    <location>
        <position position="160"/>
    </location>
</feature>
<feature type="binding site" evidence="1">
    <location>
        <begin position="15"/>
        <end position="21"/>
    </location>
    <ligand>
        <name>NADP(+)</name>
        <dbReference type="ChEBI" id="CHEBI:58349"/>
    </ligand>
</feature>
<feature type="binding site" evidence="1">
    <location>
        <begin position="129"/>
        <end position="132"/>
    </location>
    <ligand>
        <name>NADP(+)</name>
        <dbReference type="ChEBI" id="CHEBI:58349"/>
    </ligand>
</feature>
<feature type="binding site" evidence="1">
    <location>
        <position position="164"/>
    </location>
    <ligand>
        <name>NADP(+)</name>
        <dbReference type="ChEBI" id="CHEBI:58349"/>
    </ligand>
</feature>
<feature type="binding site" evidence="1">
    <location>
        <begin position="187"/>
        <end position="190"/>
    </location>
    <ligand>
        <name>NADP(+)</name>
        <dbReference type="ChEBI" id="CHEBI:58349"/>
    </ligand>
</feature>
<feature type="site" description="Lowers pKa of active site Tyr" evidence="1">
    <location>
        <position position="164"/>
    </location>
</feature>
<comment type="function">
    <text evidence="2">Catalyzes the stereospecific reduction of the C-4 keto group of dTDP-4-dehydro-6-deoxy-D-allose, leading to dTDP-6-deoxy-D-allose, an intermediate in the biosynthesis of the mycinose moiety of the chalcomycin antibiotic.</text>
</comment>
<comment type="catalytic activity">
    <reaction evidence="2">
        <text>dTDP-6-deoxy-alpha-D-allose + NAD(+) = dTDP-4-dehydro-6-deoxy-alpha-D-allose + NADH + H(+)</text>
        <dbReference type="Rhea" id="RHEA:36679"/>
        <dbReference type="ChEBI" id="CHEBI:15378"/>
        <dbReference type="ChEBI" id="CHEBI:57540"/>
        <dbReference type="ChEBI" id="CHEBI:57945"/>
        <dbReference type="ChEBI" id="CHEBI:74143"/>
        <dbReference type="ChEBI" id="CHEBI:76253"/>
        <dbReference type="EC" id="1.1.1.364"/>
    </reaction>
</comment>
<comment type="catalytic activity">
    <reaction evidence="2">
        <text>dTDP-6-deoxy-alpha-D-allose + NADP(+) = dTDP-4-dehydro-6-deoxy-alpha-D-allose + NADPH + H(+)</text>
        <dbReference type="Rhea" id="RHEA:39883"/>
        <dbReference type="ChEBI" id="CHEBI:15378"/>
        <dbReference type="ChEBI" id="CHEBI:57783"/>
        <dbReference type="ChEBI" id="CHEBI:58349"/>
        <dbReference type="ChEBI" id="CHEBI:74143"/>
        <dbReference type="ChEBI" id="CHEBI:76253"/>
        <dbReference type="EC" id="1.1.1.364"/>
    </reaction>
</comment>
<comment type="similarity">
    <text evidence="4">Belongs to the NAD(P)-dependent epimerase/dehydratase family.</text>
</comment>
<name>CHMD_STRBI</name>
<dbReference type="EC" id="1.1.1.364" evidence="2"/>
<dbReference type="EMBL" id="AY509120">
    <property type="protein sequence ID" value="AAS79455.1"/>
    <property type="molecule type" value="Genomic_DNA"/>
</dbReference>
<dbReference type="SMR" id="Q5SFA6"/>
<dbReference type="GO" id="GO:0016491">
    <property type="term" value="F:oxidoreductase activity"/>
    <property type="evidence" value="ECO:0007669"/>
    <property type="project" value="UniProtKB-KW"/>
</dbReference>
<dbReference type="GO" id="GO:0017000">
    <property type="term" value="P:antibiotic biosynthetic process"/>
    <property type="evidence" value="ECO:0007669"/>
    <property type="project" value="UniProtKB-KW"/>
</dbReference>
<dbReference type="Gene3D" id="3.40.50.720">
    <property type="entry name" value="NAD(P)-binding Rossmann-like Domain"/>
    <property type="match status" value="1"/>
</dbReference>
<dbReference type="InterPro" id="IPR001509">
    <property type="entry name" value="Epimerase_deHydtase"/>
</dbReference>
<dbReference type="InterPro" id="IPR036291">
    <property type="entry name" value="NAD(P)-bd_dom_sf"/>
</dbReference>
<dbReference type="PANTHER" id="PTHR43000">
    <property type="entry name" value="DTDP-D-GLUCOSE 4,6-DEHYDRATASE-RELATED"/>
    <property type="match status" value="1"/>
</dbReference>
<dbReference type="Pfam" id="PF01370">
    <property type="entry name" value="Epimerase"/>
    <property type="match status" value="1"/>
</dbReference>
<dbReference type="SUPFAM" id="SSF51735">
    <property type="entry name" value="NAD(P)-binding Rossmann-fold domains"/>
    <property type="match status" value="1"/>
</dbReference>
<protein>
    <recommendedName>
        <fullName evidence="5">dTDP-4-dehydro-6-deoxy-D-allose reductase</fullName>
        <ecNumber evidence="2">1.1.1.364</ecNumber>
    </recommendedName>
    <alternativeName>
        <fullName evidence="4">dTDP-4-dehydro-6-deoxy-alpha-D-gulose 4-ketoreductase</fullName>
    </alternativeName>
    <alternativeName>
        <fullName evidence="3">dTDP-4-keto-6-deoxyallose reductase</fullName>
    </alternativeName>
</protein>
<keyword id="KW-0045">Antibiotic biosynthesis</keyword>
<keyword id="KW-0119">Carbohydrate metabolism</keyword>
<keyword id="KW-0521">NADP</keyword>
<keyword id="KW-0560">Oxidoreductase</keyword>
<proteinExistence type="evidence at protein level"/>
<evidence type="ECO:0000250" key="1"/>
<evidence type="ECO:0000269" key="2">
    <source>
    </source>
</evidence>
<evidence type="ECO:0000303" key="3">
    <source>
    </source>
</evidence>
<evidence type="ECO:0000305" key="4"/>
<evidence type="ECO:0000305" key="5">
    <source>
    </source>
</evidence>
<organism>
    <name type="scientific">Streptomyces bikiniensis</name>
    <dbReference type="NCBI Taxonomy" id="1896"/>
    <lineage>
        <taxon>Bacteria</taxon>
        <taxon>Bacillati</taxon>
        <taxon>Actinomycetota</taxon>
        <taxon>Actinomycetes</taxon>
        <taxon>Kitasatosporales</taxon>
        <taxon>Streptomycetaceae</taxon>
        <taxon>Streptomyces</taxon>
    </lineage>
</organism>
<gene>
    <name type="primary">chmD</name>
</gene>